<keyword id="KW-0963">Cytoplasm</keyword>
<keyword id="KW-0328">Glycosyltransferase</keyword>
<keyword id="KW-0660">Purine salvage</keyword>
<keyword id="KW-0808">Transferase</keyword>
<proteinExistence type="inferred from homology"/>
<reference key="1">
    <citation type="journal article" date="2002" name="Proc. Natl. Acad. Sci. U.S.A.">
        <title>Genome sequence of a serotype M3 strain of group A Streptococcus: phage-encoded toxins, the high-virulence phenotype, and clone emergence.</title>
        <authorList>
            <person name="Beres S.B."/>
            <person name="Sylva G.L."/>
            <person name="Barbian K.D."/>
            <person name="Lei B."/>
            <person name="Hoff J.S."/>
            <person name="Mammarella N.D."/>
            <person name="Liu M.-Y."/>
            <person name="Smoot J.C."/>
            <person name="Porcella S.F."/>
            <person name="Parkins L.D."/>
            <person name="Campbell D.S."/>
            <person name="Smith T.M."/>
            <person name="McCormick J.K."/>
            <person name="Leung D.Y.M."/>
            <person name="Schlievert P.M."/>
            <person name="Musser J.M."/>
        </authorList>
    </citation>
    <scope>NUCLEOTIDE SEQUENCE [LARGE SCALE GENOMIC DNA]</scope>
    <source>
        <strain>ATCC BAA-595 / MGAS315</strain>
    </source>
</reference>
<sequence length="193" mass="20994">MQLLEERILTDGNILGENILKVDNFLTHQVDYRLMKAIGKVFAQKYAEAGITKVVTIEASGIAPAVYAAEAMDVPMIFAKKHKNITMTEGILTAEVYSFTKQVTSTVSIAGKFLSKEDKVLIIDDFLANGQAAKGLIEIIGQAGAQVVGVGIVIEKSFQDGRRLIEDMGIEVTSLARIKNFENGNLNFLEADA</sequence>
<feature type="chain" id="PRO_0000339772" description="Xanthine phosphoribosyltransferase">
    <location>
        <begin position="1"/>
        <end position="193"/>
    </location>
</feature>
<feature type="binding site" evidence="1">
    <location>
        <position position="20"/>
    </location>
    <ligand>
        <name>xanthine</name>
        <dbReference type="ChEBI" id="CHEBI:17712"/>
    </ligand>
</feature>
<feature type="binding site" evidence="1">
    <location>
        <position position="27"/>
    </location>
    <ligand>
        <name>xanthine</name>
        <dbReference type="ChEBI" id="CHEBI:17712"/>
    </ligand>
</feature>
<feature type="binding site" evidence="1">
    <location>
        <begin position="128"/>
        <end position="132"/>
    </location>
    <ligand>
        <name>5-phospho-alpha-D-ribose 1-diphosphate</name>
        <dbReference type="ChEBI" id="CHEBI:58017"/>
    </ligand>
</feature>
<feature type="binding site" evidence="1">
    <location>
        <position position="156"/>
    </location>
    <ligand>
        <name>xanthine</name>
        <dbReference type="ChEBI" id="CHEBI:17712"/>
    </ligand>
</feature>
<organism>
    <name type="scientific">Streptococcus pyogenes serotype M3 (strain ATCC BAA-595 / MGAS315)</name>
    <dbReference type="NCBI Taxonomy" id="198466"/>
    <lineage>
        <taxon>Bacteria</taxon>
        <taxon>Bacillati</taxon>
        <taxon>Bacillota</taxon>
        <taxon>Bacilli</taxon>
        <taxon>Lactobacillales</taxon>
        <taxon>Streptococcaceae</taxon>
        <taxon>Streptococcus</taxon>
    </lineage>
</organism>
<dbReference type="EC" id="2.4.2.22" evidence="1"/>
<dbReference type="EMBL" id="AE014074">
    <property type="protein sequence ID" value="AAM79401.1"/>
    <property type="molecule type" value="Genomic_DNA"/>
</dbReference>
<dbReference type="RefSeq" id="WP_002984677.1">
    <property type="nucleotide sequence ID" value="NC_004070.1"/>
</dbReference>
<dbReference type="SMR" id="P0DH48"/>
<dbReference type="KEGG" id="spg:SpyM3_0794"/>
<dbReference type="HOGENOM" id="CLU_099015_0_0_9"/>
<dbReference type="UniPathway" id="UPA00602">
    <property type="reaction ID" value="UER00658"/>
</dbReference>
<dbReference type="Proteomes" id="UP000000564">
    <property type="component" value="Chromosome"/>
</dbReference>
<dbReference type="GO" id="GO:0005737">
    <property type="term" value="C:cytoplasm"/>
    <property type="evidence" value="ECO:0007669"/>
    <property type="project" value="UniProtKB-SubCell"/>
</dbReference>
<dbReference type="GO" id="GO:0000310">
    <property type="term" value="F:xanthine phosphoribosyltransferase activity"/>
    <property type="evidence" value="ECO:0007669"/>
    <property type="project" value="UniProtKB-UniRule"/>
</dbReference>
<dbReference type="GO" id="GO:0006166">
    <property type="term" value="P:purine ribonucleoside salvage"/>
    <property type="evidence" value="ECO:0007669"/>
    <property type="project" value="UniProtKB-KW"/>
</dbReference>
<dbReference type="GO" id="GO:0046110">
    <property type="term" value="P:xanthine metabolic process"/>
    <property type="evidence" value="ECO:0007669"/>
    <property type="project" value="InterPro"/>
</dbReference>
<dbReference type="GO" id="GO:0032265">
    <property type="term" value="P:XMP salvage"/>
    <property type="evidence" value="ECO:0007669"/>
    <property type="project" value="UniProtKB-UniRule"/>
</dbReference>
<dbReference type="CDD" id="cd06223">
    <property type="entry name" value="PRTases_typeI"/>
    <property type="match status" value="1"/>
</dbReference>
<dbReference type="Gene3D" id="3.40.50.2020">
    <property type="match status" value="1"/>
</dbReference>
<dbReference type="HAMAP" id="MF_01184">
    <property type="entry name" value="XPRTase"/>
    <property type="match status" value="1"/>
</dbReference>
<dbReference type="InterPro" id="IPR000836">
    <property type="entry name" value="PRibTrfase_dom"/>
</dbReference>
<dbReference type="InterPro" id="IPR029057">
    <property type="entry name" value="PRTase-like"/>
</dbReference>
<dbReference type="InterPro" id="IPR050118">
    <property type="entry name" value="Pur/Pyrimidine_PRTase"/>
</dbReference>
<dbReference type="InterPro" id="IPR010079">
    <property type="entry name" value="Xanthine_PRibTrfase"/>
</dbReference>
<dbReference type="NCBIfam" id="NF006671">
    <property type="entry name" value="PRK09219.1"/>
    <property type="match status" value="1"/>
</dbReference>
<dbReference type="NCBIfam" id="TIGR01744">
    <property type="entry name" value="XPRTase"/>
    <property type="match status" value="1"/>
</dbReference>
<dbReference type="PANTHER" id="PTHR43864">
    <property type="entry name" value="HYPOXANTHINE/GUANINE PHOSPHORIBOSYLTRANSFERASE"/>
    <property type="match status" value="1"/>
</dbReference>
<dbReference type="PANTHER" id="PTHR43864:SF1">
    <property type="entry name" value="XANTHINE PHOSPHORIBOSYLTRANSFERASE"/>
    <property type="match status" value="1"/>
</dbReference>
<dbReference type="Pfam" id="PF00156">
    <property type="entry name" value="Pribosyltran"/>
    <property type="match status" value="1"/>
</dbReference>
<dbReference type="SUPFAM" id="SSF53271">
    <property type="entry name" value="PRTase-like"/>
    <property type="match status" value="1"/>
</dbReference>
<protein>
    <recommendedName>
        <fullName evidence="1">Xanthine phosphoribosyltransferase</fullName>
        <shortName evidence="1">XPRTase</shortName>
        <ecNumber evidence="1">2.4.2.22</ecNumber>
    </recommendedName>
</protein>
<gene>
    <name evidence="1" type="primary">xpt</name>
    <name type="ordered locus">SpyM3_0794</name>
</gene>
<comment type="function">
    <text evidence="1">Converts the preformed base xanthine, a product of nucleic acid breakdown, to xanthosine 5'-monophosphate (XMP), so it can be reused for RNA or DNA synthesis.</text>
</comment>
<comment type="catalytic activity">
    <reaction evidence="1">
        <text>XMP + diphosphate = xanthine + 5-phospho-alpha-D-ribose 1-diphosphate</text>
        <dbReference type="Rhea" id="RHEA:10800"/>
        <dbReference type="ChEBI" id="CHEBI:17712"/>
        <dbReference type="ChEBI" id="CHEBI:33019"/>
        <dbReference type="ChEBI" id="CHEBI:57464"/>
        <dbReference type="ChEBI" id="CHEBI:58017"/>
        <dbReference type="EC" id="2.4.2.22"/>
    </reaction>
</comment>
<comment type="pathway">
    <text evidence="1">Purine metabolism; XMP biosynthesis via salvage pathway; XMP from xanthine: step 1/1.</text>
</comment>
<comment type="subunit">
    <text evidence="1">Homodimer.</text>
</comment>
<comment type="subcellular location">
    <subcellularLocation>
        <location evidence="1">Cytoplasm</location>
    </subcellularLocation>
</comment>
<comment type="similarity">
    <text evidence="1">Belongs to the purine/pyrimidine phosphoribosyltransferase family. Xpt subfamily.</text>
</comment>
<name>XPT_STRP3</name>
<evidence type="ECO:0000255" key="1">
    <source>
        <dbReference type="HAMAP-Rule" id="MF_01184"/>
    </source>
</evidence>
<accession>P0DH48</accession>
<accession>Q79X80</accession>
<accession>Q7CF46</accession>